<keyword id="KW-0067">ATP-binding</keyword>
<keyword id="KW-0173">Coenzyme A biosynthesis</keyword>
<keyword id="KW-0963">Cytoplasm</keyword>
<keyword id="KW-0460">Magnesium</keyword>
<keyword id="KW-0547">Nucleotide-binding</keyword>
<keyword id="KW-0548">Nucleotidyltransferase</keyword>
<keyword id="KW-0808">Transferase</keyword>
<feature type="chain" id="PRO_1000076754" description="Phosphopantetheine adenylyltransferase">
    <location>
        <begin position="1"/>
        <end position="162"/>
    </location>
</feature>
<feature type="binding site" evidence="1">
    <location>
        <begin position="9"/>
        <end position="10"/>
    </location>
    <ligand>
        <name>ATP</name>
        <dbReference type="ChEBI" id="CHEBI:30616"/>
    </ligand>
</feature>
<feature type="binding site" evidence="1">
    <location>
        <position position="9"/>
    </location>
    <ligand>
        <name>substrate</name>
    </ligand>
</feature>
<feature type="binding site" evidence="1">
    <location>
        <position position="17"/>
    </location>
    <ligand>
        <name>ATP</name>
        <dbReference type="ChEBI" id="CHEBI:30616"/>
    </ligand>
</feature>
<feature type="binding site" evidence="1">
    <location>
        <position position="41"/>
    </location>
    <ligand>
        <name>substrate</name>
    </ligand>
</feature>
<feature type="binding site" evidence="1">
    <location>
        <position position="76"/>
    </location>
    <ligand>
        <name>substrate</name>
    </ligand>
</feature>
<feature type="binding site" evidence="1">
    <location>
        <position position="90"/>
    </location>
    <ligand>
        <name>substrate</name>
    </ligand>
</feature>
<feature type="binding site" evidence="1">
    <location>
        <begin position="91"/>
        <end position="93"/>
    </location>
    <ligand>
        <name>ATP</name>
        <dbReference type="ChEBI" id="CHEBI:30616"/>
    </ligand>
</feature>
<feature type="binding site" evidence="1">
    <location>
        <position position="101"/>
    </location>
    <ligand>
        <name>ATP</name>
        <dbReference type="ChEBI" id="CHEBI:30616"/>
    </ligand>
</feature>
<feature type="binding site" evidence="1">
    <location>
        <begin position="126"/>
        <end position="132"/>
    </location>
    <ligand>
        <name>ATP</name>
        <dbReference type="ChEBI" id="CHEBI:30616"/>
    </ligand>
</feature>
<feature type="site" description="Transition state stabilizer" evidence="1">
    <location>
        <position position="17"/>
    </location>
</feature>
<accession>B0SZS4</accession>
<name>COAD_CAUSK</name>
<sequence>MRIGLYPGTFDPVTNGHLDIIGRAVKLVDKLVIGVAVNIGKGPLFTLEERVATLERETAHLTKIAQIEVRPFDTLLMYFAREVGAQMIVRGLRAVADFEYEFQMTAMNQQLDREIETVFLMADPRHQAIASRLVKEIAALGGDVHKFVPPGVAEQLLAKLAK</sequence>
<proteinExistence type="inferred from homology"/>
<reference key="1">
    <citation type="submission" date="2008-01" db="EMBL/GenBank/DDBJ databases">
        <title>Complete sequence of chromosome of Caulobacter sp. K31.</title>
        <authorList>
            <consortium name="US DOE Joint Genome Institute"/>
            <person name="Copeland A."/>
            <person name="Lucas S."/>
            <person name="Lapidus A."/>
            <person name="Barry K."/>
            <person name="Glavina del Rio T."/>
            <person name="Dalin E."/>
            <person name="Tice H."/>
            <person name="Pitluck S."/>
            <person name="Bruce D."/>
            <person name="Goodwin L."/>
            <person name="Thompson L.S."/>
            <person name="Brettin T."/>
            <person name="Detter J.C."/>
            <person name="Han C."/>
            <person name="Schmutz J."/>
            <person name="Larimer F."/>
            <person name="Land M."/>
            <person name="Hauser L."/>
            <person name="Kyrpides N."/>
            <person name="Kim E."/>
            <person name="Stephens C."/>
            <person name="Richardson P."/>
        </authorList>
    </citation>
    <scope>NUCLEOTIDE SEQUENCE [LARGE SCALE GENOMIC DNA]</scope>
    <source>
        <strain>K31</strain>
    </source>
</reference>
<organism>
    <name type="scientific">Caulobacter sp. (strain K31)</name>
    <dbReference type="NCBI Taxonomy" id="366602"/>
    <lineage>
        <taxon>Bacteria</taxon>
        <taxon>Pseudomonadati</taxon>
        <taxon>Pseudomonadota</taxon>
        <taxon>Alphaproteobacteria</taxon>
        <taxon>Caulobacterales</taxon>
        <taxon>Caulobacteraceae</taxon>
        <taxon>Caulobacter</taxon>
    </lineage>
</organism>
<comment type="function">
    <text evidence="1">Reversibly transfers an adenylyl group from ATP to 4'-phosphopantetheine, yielding dephospho-CoA (dPCoA) and pyrophosphate.</text>
</comment>
<comment type="catalytic activity">
    <reaction evidence="1">
        <text>(R)-4'-phosphopantetheine + ATP + H(+) = 3'-dephospho-CoA + diphosphate</text>
        <dbReference type="Rhea" id="RHEA:19801"/>
        <dbReference type="ChEBI" id="CHEBI:15378"/>
        <dbReference type="ChEBI" id="CHEBI:30616"/>
        <dbReference type="ChEBI" id="CHEBI:33019"/>
        <dbReference type="ChEBI" id="CHEBI:57328"/>
        <dbReference type="ChEBI" id="CHEBI:61723"/>
        <dbReference type="EC" id="2.7.7.3"/>
    </reaction>
</comment>
<comment type="cofactor">
    <cofactor evidence="1">
        <name>Mg(2+)</name>
        <dbReference type="ChEBI" id="CHEBI:18420"/>
    </cofactor>
</comment>
<comment type="pathway">
    <text evidence="1">Cofactor biosynthesis; coenzyme A biosynthesis; CoA from (R)-pantothenate: step 4/5.</text>
</comment>
<comment type="subunit">
    <text evidence="1">Homohexamer.</text>
</comment>
<comment type="subcellular location">
    <subcellularLocation>
        <location evidence="1">Cytoplasm</location>
    </subcellularLocation>
</comment>
<comment type="similarity">
    <text evidence="1">Belongs to the bacterial CoaD family.</text>
</comment>
<gene>
    <name evidence="1" type="primary">coaD</name>
    <name type="ordered locus">Caul_2870</name>
</gene>
<protein>
    <recommendedName>
        <fullName evidence="1">Phosphopantetheine adenylyltransferase</fullName>
        <ecNumber evidence="1">2.7.7.3</ecNumber>
    </recommendedName>
    <alternativeName>
        <fullName evidence="1">Dephospho-CoA pyrophosphorylase</fullName>
    </alternativeName>
    <alternativeName>
        <fullName evidence="1">Pantetheine-phosphate adenylyltransferase</fullName>
        <shortName evidence="1">PPAT</shortName>
    </alternativeName>
</protein>
<evidence type="ECO:0000255" key="1">
    <source>
        <dbReference type="HAMAP-Rule" id="MF_00151"/>
    </source>
</evidence>
<dbReference type="EC" id="2.7.7.3" evidence="1"/>
<dbReference type="EMBL" id="CP000927">
    <property type="protein sequence ID" value="ABZ71997.1"/>
    <property type="molecule type" value="Genomic_DNA"/>
</dbReference>
<dbReference type="SMR" id="B0SZS4"/>
<dbReference type="STRING" id="366602.Caul_2870"/>
<dbReference type="KEGG" id="cak:Caul_2870"/>
<dbReference type="eggNOG" id="COG0669">
    <property type="taxonomic scope" value="Bacteria"/>
</dbReference>
<dbReference type="HOGENOM" id="CLU_100149_0_1_5"/>
<dbReference type="OrthoDB" id="9806661at2"/>
<dbReference type="UniPathway" id="UPA00241">
    <property type="reaction ID" value="UER00355"/>
</dbReference>
<dbReference type="GO" id="GO:0005737">
    <property type="term" value="C:cytoplasm"/>
    <property type="evidence" value="ECO:0007669"/>
    <property type="project" value="UniProtKB-SubCell"/>
</dbReference>
<dbReference type="GO" id="GO:0005524">
    <property type="term" value="F:ATP binding"/>
    <property type="evidence" value="ECO:0007669"/>
    <property type="project" value="UniProtKB-KW"/>
</dbReference>
<dbReference type="GO" id="GO:0004595">
    <property type="term" value="F:pantetheine-phosphate adenylyltransferase activity"/>
    <property type="evidence" value="ECO:0007669"/>
    <property type="project" value="UniProtKB-UniRule"/>
</dbReference>
<dbReference type="GO" id="GO:0015937">
    <property type="term" value="P:coenzyme A biosynthetic process"/>
    <property type="evidence" value="ECO:0007669"/>
    <property type="project" value="UniProtKB-UniRule"/>
</dbReference>
<dbReference type="CDD" id="cd02163">
    <property type="entry name" value="PPAT"/>
    <property type="match status" value="1"/>
</dbReference>
<dbReference type="Gene3D" id="3.40.50.620">
    <property type="entry name" value="HUPs"/>
    <property type="match status" value="1"/>
</dbReference>
<dbReference type="HAMAP" id="MF_00151">
    <property type="entry name" value="PPAT_bact"/>
    <property type="match status" value="1"/>
</dbReference>
<dbReference type="InterPro" id="IPR004821">
    <property type="entry name" value="Cyt_trans-like"/>
</dbReference>
<dbReference type="InterPro" id="IPR001980">
    <property type="entry name" value="PPAT"/>
</dbReference>
<dbReference type="InterPro" id="IPR014729">
    <property type="entry name" value="Rossmann-like_a/b/a_fold"/>
</dbReference>
<dbReference type="NCBIfam" id="TIGR01510">
    <property type="entry name" value="coaD_prev_kdtB"/>
    <property type="match status" value="1"/>
</dbReference>
<dbReference type="NCBIfam" id="TIGR00125">
    <property type="entry name" value="cyt_tran_rel"/>
    <property type="match status" value="1"/>
</dbReference>
<dbReference type="PANTHER" id="PTHR21342">
    <property type="entry name" value="PHOSPHOPANTETHEINE ADENYLYLTRANSFERASE"/>
    <property type="match status" value="1"/>
</dbReference>
<dbReference type="PANTHER" id="PTHR21342:SF1">
    <property type="entry name" value="PHOSPHOPANTETHEINE ADENYLYLTRANSFERASE"/>
    <property type="match status" value="1"/>
</dbReference>
<dbReference type="Pfam" id="PF01467">
    <property type="entry name" value="CTP_transf_like"/>
    <property type="match status" value="1"/>
</dbReference>
<dbReference type="PRINTS" id="PR01020">
    <property type="entry name" value="LPSBIOSNTHSS"/>
</dbReference>
<dbReference type="SUPFAM" id="SSF52374">
    <property type="entry name" value="Nucleotidylyl transferase"/>
    <property type="match status" value="1"/>
</dbReference>